<organismHost>
    <name type="scientific">Homo sapiens</name>
    <name type="common">Human</name>
    <dbReference type="NCBI Taxonomy" id="9606"/>
</organismHost>
<name>PP150_HCMVM</name>
<comment type="function">
    <text evidence="2">Participates in the last steps of viral maturation and release. Associates with nuclear capsids prior to DNA encapsidation and later preserves the integrity of nucleocapsids through secondary envelopment at the assembly compartment. Interacts with host CCNA2 and thereby blocks the onset of lytic gene expression to promote establishment of a quiescent state of infection in undifferentiated cells.</text>
</comment>
<comment type="subunit">
    <text evidence="2">Interacts with host BICD1 and RAB6A. Interacts with small capsid protein UL48A; this interaction links together the capsid and pp150. Interacts with host CCNA2.</text>
</comment>
<comment type="subcellular location">
    <subcellularLocation>
        <location evidence="2">Virion tegument</location>
    </subcellularLocation>
    <subcellularLocation>
        <location evidence="2">Host cytoplasm</location>
    </subcellularLocation>
    <subcellularLocation>
        <location evidence="2">Host nucleus</location>
    </subcellularLocation>
    <text evidence="2">Found initially localized in the host nucleus, associated either with the nuclear membrane or with viral assembly regions, and later in the host cytoplasm.</text>
</comment>
<comment type="PTM">
    <text evidence="2">Phosphorylated by host CCNA2.</text>
</comment>
<comment type="similarity">
    <text evidence="4">Belongs to the herpesviridae large structural phosphoprotein family.</text>
</comment>
<organism>
    <name type="scientific">Human cytomegalovirus (strain Merlin)</name>
    <name type="common">HHV-5</name>
    <name type="synonym">Human herpesvirus 5</name>
    <dbReference type="NCBI Taxonomy" id="295027"/>
    <lineage>
        <taxon>Viruses</taxon>
        <taxon>Duplodnaviria</taxon>
        <taxon>Heunggongvirae</taxon>
        <taxon>Peploviricota</taxon>
        <taxon>Herviviricetes</taxon>
        <taxon>Herpesvirales</taxon>
        <taxon>Orthoherpesviridae</taxon>
        <taxon>Betaherpesvirinae</taxon>
        <taxon>Cytomegalovirus</taxon>
        <taxon>Cytomegalovirus humanbeta5</taxon>
        <taxon>Human cytomegalovirus</taxon>
    </lineage>
</organism>
<gene>
    <name type="primary">UL32</name>
</gene>
<evidence type="ECO:0000250" key="1"/>
<evidence type="ECO:0000250" key="2">
    <source>
        <dbReference type="UniProtKB" id="P08318"/>
    </source>
</evidence>
<evidence type="ECO:0000256" key="3">
    <source>
        <dbReference type="SAM" id="MobiDB-lite"/>
    </source>
</evidence>
<evidence type="ECO:0000305" key="4"/>
<sequence length="1049" mass="112759">MSLQFIGLQRRDVVALVNFLRHLTQKPDVDLEAHPKILKKCGEKRLHRRTVLFNELMLWLGYYRELRFHNPDLSSVLEEFEVRCAAVARRGYTYPFGDRGKARDHLAVLDRTEFDTDVRHDAEIVERALVSAVILAKMSVRETLVTAIGQTEPIAFVHLKDTEVQRIEENLEGVRRNMFCAKPLDLNLDRHANTALVNAVNKLVYTGRLIMNVRRSWEELERKCLARIQERCKLLVKELRMCLSFDSNYCRNILKHAVENGDSADTLLELLIEDFDIYVDSFPQSAHTFLGARSPSLEFDDDANLLSLGGGSAFSSVPKKHVPTQPLDGWSWIASPWKGHKPFRFEAHGSLAPAAEAHAARSAAVGYYDEEEKRRERQKRVDDEVVQREKQQLKAWEERQQNLQQRQQQPPPPTRKPGASRRLFGSSADEDDDDDDDDEKNIFTPIKKPGTSGKGAASGGGVSSIFSGLLSSGSQKPTSGPLNIPQQQQRHAAFSLVSPQVTKASPGRVRRDSAWDVRPLTETRGDLFSGDEDSDSSDGYPPNRQDPRFTDTLVDITDTETSAKPPVTTAYKFEQPTLTFGAGVNVPAGAGAAILTPTPVNPSTAPAPAPTPTFAGTQTPVNGNSPWAPTAPLPGDMNPANWPRERAWALKNPHLAYNPFRMPTTSTASQNTVSTTPRRPSTPRAAVTQTASRDAADEVWALRDQTAESPVEDSEEEDDDSSDTGSVVSLGHTTPSSDYNNDVISPPSQTPEQSTPSRIRKAKLSSPMTTTSTSQKPVLGKRVATPHASARAQTVTSTPVQGRLEKQVSGTPSTVPATLLQPQPASSKTTSSRNVTSGAGTSSASSARQPSASASVLSPTEDDVVSPATSPLSMLSSASPSPAKSAPPSPVKGRGSRVGVPSLKPTLGGKAVVGRPPSVPVSGSAPGRLSGSSRAASTTPTYPAVTTVYPPSSTAKSSVSNAPPVASPSILKPGASAALQSRRSTGIAAVGSPVKSTTGMKTVAFDLSSPQKSGTGPQPGSAGMGGAKTPSDAVQNILQKIEKIKNTEE</sequence>
<protein>
    <recommendedName>
        <fullName>Tegument protein pp150</fullName>
    </recommendedName>
</protein>
<accession>Q6SW99</accession>
<accession>D2K3K0</accession>
<feature type="chain" id="PRO_0000418267" description="Tegument protein pp150">
    <location>
        <begin position="1"/>
        <end position="1049"/>
    </location>
</feature>
<feature type="region of interest" description="Disordered" evidence="3">
    <location>
        <begin position="397"/>
        <end position="549"/>
    </location>
</feature>
<feature type="region of interest" description="Disordered" evidence="3">
    <location>
        <begin position="659"/>
        <end position="945"/>
    </location>
</feature>
<feature type="region of interest" description="Disordered" evidence="3">
    <location>
        <begin position="1006"/>
        <end position="1032"/>
    </location>
</feature>
<feature type="compositionally biased region" description="Acidic residues" evidence="3">
    <location>
        <begin position="428"/>
        <end position="439"/>
    </location>
</feature>
<feature type="compositionally biased region" description="Gly residues" evidence="3">
    <location>
        <begin position="452"/>
        <end position="462"/>
    </location>
</feature>
<feature type="compositionally biased region" description="Low complexity" evidence="3">
    <location>
        <begin position="463"/>
        <end position="474"/>
    </location>
</feature>
<feature type="compositionally biased region" description="Polar residues" evidence="3">
    <location>
        <begin position="475"/>
        <end position="490"/>
    </location>
</feature>
<feature type="compositionally biased region" description="Basic and acidic residues" evidence="3">
    <location>
        <begin position="509"/>
        <end position="525"/>
    </location>
</feature>
<feature type="compositionally biased region" description="Low complexity" evidence="3">
    <location>
        <begin position="672"/>
        <end position="688"/>
    </location>
</feature>
<feature type="compositionally biased region" description="Acidic residues" evidence="3">
    <location>
        <begin position="710"/>
        <end position="722"/>
    </location>
</feature>
<feature type="compositionally biased region" description="Polar residues" evidence="3">
    <location>
        <begin position="731"/>
        <end position="743"/>
    </location>
</feature>
<feature type="compositionally biased region" description="Low complexity" evidence="3">
    <location>
        <begin position="745"/>
        <end position="757"/>
    </location>
</feature>
<feature type="compositionally biased region" description="Polar residues" evidence="3">
    <location>
        <begin position="766"/>
        <end position="776"/>
    </location>
</feature>
<feature type="compositionally biased region" description="Polar residues" evidence="3">
    <location>
        <begin position="791"/>
        <end position="800"/>
    </location>
</feature>
<feature type="compositionally biased region" description="Polar residues" evidence="3">
    <location>
        <begin position="808"/>
        <end position="835"/>
    </location>
</feature>
<feature type="compositionally biased region" description="Low complexity" evidence="3">
    <location>
        <begin position="836"/>
        <end position="855"/>
    </location>
</feature>
<feature type="compositionally biased region" description="Low complexity" evidence="3">
    <location>
        <begin position="866"/>
        <end position="884"/>
    </location>
</feature>
<feature type="compositionally biased region" description="Low complexity" evidence="3">
    <location>
        <begin position="912"/>
        <end position="928"/>
    </location>
</feature>
<feature type="compositionally biased region" description="Low complexity" evidence="3">
    <location>
        <begin position="936"/>
        <end position="945"/>
    </location>
</feature>
<feature type="compositionally biased region" description="Polar residues" evidence="3">
    <location>
        <begin position="1008"/>
        <end position="1018"/>
    </location>
</feature>
<feature type="glycosylation site" description="O-linked (GlcNAc) serine; by host" evidence="1">
    <location>
        <position position="922"/>
    </location>
</feature>
<feature type="glycosylation site" description="O-linked (GlcNAc) serine; by host" evidence="1">
    <location>
        <position position="953"/>
    </location>
</feature>
<keyword id="KW-0325">Glycoprotein</keyword>
<keyword id="KW-1035">Host cytoplasm</keyword>
<keyword id="KW-1048">Host nucleus</keyword>
<keyword id="KW-0945">Host-virus interaction</keyword>
<keyword id="KW-0597">Phosphoprotein</keyword>
<keyword id="KW-1185">Reference proteome</keyword>
<keyword id="KW-0946">Virion</keyword>
<keyword id="KW-0920">Virion tegument</keyword>
<dbReference type="EMBL" id="AY446894">
    <property type="protein sequence ID" value="AAR31597.1"/>
    <property type="molecule type" value="Genomic_DNA"/>
</dbReference>
<dbReference type="RefSeq" id="YP_081491.1">
    <property type="nucleotide sequence ID" value="NC_006273.2"/>
</dbReference>
<dbReference type="SMR" id="Q6SW99"/>
<dbReference type="BioGRID" id="1677976">
    <property type="interactions" value="1"/>
</dbReference>
<dbReference type="GlyCosmos" id="Q6SW99">
    <property type="glycosylation" value="2 sites, No reported glycans"/>
</dbReference>
<dbReference type="DNASU" id="3077422"/>
<dbReference type="GeneID" id="3077422"/>
<dbReference type="KEGG" id="vg:3077422"/>
<dbReference type="Reactome" id="R-HSA-9609690">
    <property type="pathway name" value="HCMV Early Events"/>
</dbReference>
<dbReference type="Reactome" id="R-HSA-9610379">
    <property type="pathway name" value="HCMV Late Events"/>
</dbReference>
<dbReference type="Proteomes" id="UP000000938">
    <property type="component" value="Segment"/>
</dbReference>
<dbReference type="GO" id="GO:0030430">
    <property type="term" value="C:host cell cytoplasm"/>
    <property type="evidence" value="ECO:0007669"/>
    <property type="project" value="UniProtKB-SubCell"/>
</dbReference>
<dbReference type="GO" id="GO:0042025">
    <property type="term" value="C:host cell nucleus"/>
    <property type="evidence" value="ECO:0007669"/>
    <property type="project" value="UniProtKB-SubCell"/>
</dbReference>
<dbReference type="GO" id="GO:0019028">
    <property type="term" value="C:viral capsid"/>
    <property type="evidence" value="ECO:0000304"/>
    <property type="project" value="Reactome"/>
</dbReference>
<dbReference type="GO" id="GO:0019033">
    <property type="term" value="C:viral tegument"/>
    <property type="evidence" value="ECO:0007669"/>
    <property type="project" value="UniProtKB-SubCell"/>
</dbReference>
<dbReference type="GO" id="GO:0005198">
    <property type="term" value="F:structural molecule activity"/>
    <property type="evidence" value="ECO:0007669"/>
    <property type="project" value="InterPro"/>
</dbReference>
<dbReference type="InterPro" id="IPR010340">
    <property type="entry name" value="Herpes_UL11/UL32"/>
</dbReference>
<dbReference type="Pfam" id="PF06070">
    <property type="entry name" value="Herpes_UL32"/>
    <property type="match status" value="1"/>
</dbReference>
<reference key="1">
    <citation type="journal article" date="2004" name="J. Gen. Virol.">
        <title>Genetic content of wild-type human cytomegalovirus.</title>
        <authorList>
            <person name="Dolan A."/>
            <person name="Cunningham C."/>
            <person name="Hector R.D."/>
            <person name="Hassan-Walker A.F."/>
            <person name="Lee L."/>
            <person name="Addison C."/>
            <person name="Dargan D.J."/>
            <person name="McGeoch D.J."/>
            <person name="Gatherer D."/>
            <person name="Emery V.C."/>
            <person name="Griffiths P.D."/>
            <person name="Sinzger C."/>
            <person name="McSharry B.P."/>
            <person name="Wilkinson G.W.G."/>
            <person name="Davison A.J."/>
        </authorList>
    </citation>
    <scope>NUCLEOTIDE SEQUENCE [LARGE SCALE GENOMIC DNA]</scope>
</reference>
<proteinExistence type="inferred from homology"/>